<comment type="subunit">
    <text evidence="1">Part of the 30S ribosomal subunit.</text>
</comment>
<comment type="subcellular location">
    <subcellularLocation>
        <location>Plastid</location>
        <location>Chloroplast</location>
    </subcellularLocation>
</comment>
<comment type="similarity">
    <text evidence="1">Belongs to the universal ribosomal protein uS11 family.</text>
</comment>
<protein>
    <recommendedName>
        <fullName evidence="1">Small ribosomal subunit protein uS11c</fullName>
    </recommendedName>
    <alternativeName>
        <fullName evidence="3">30S ribosomal protein S11, chloroplastic</fullName>
    </alternativeName>
</protein>
<geneLocation type="chloroplast"/>
<reference key="1">
    <citation type="journal article" date="2006" name="Plant Cell Rep.">
        <title>The complete chloroplast genome sequences of Solanum tuberosum and comparative analysis with Solanaceae species identified the presence of a 241-bp deletion in cultivated potato chloroplast DNA sequence.</title>
        <authorList>
            <person name="Chung H.-J."/>
            <person name="Jung J.D."/>
            <person name="Park H.-W."/>
            <person name="Kim J.-H."/>
            <person name="Cha H.W."/>
            <person name="Min S.R."/>
            <person name="Jeong W.-J."/>
            <person name="Liu J.R."/>
        </authorList>
    </citation>
    <scope>NUCLEOTIDE SEQUENCE [LARGE SCALE GENOMIC DNA]</scope>
    <source>
        <strain>cv. Desiree</strain>
    </source>
</reference>
<reference key="2">
    <citation type="submission" date="2006-02" db="EMBL/GenBank/DDBJ databases">
        <title>Complete chloroplast genome sequences of Solanum tuberosum cultivar Desiree and comparative analyses with other Solanaceae genomes.</title>
        <authorList>
            <person name="Gargano D."/>
            <person name="Scotti N."/>
            <person name="Vezzi A."/>
            <person name="Bilardi A."/>
            <person name="Valle G."/>
            <person name="Grillo S."/>
            <person name="Cardi T."/>
        </authorList>
    </citation>
    <scope>NUCLEOTIDE SEQUENCE [LARGE SCALE GENOMIC DNA]</scope>
    <source>
        <strain>cv. Desiree</strain>
    </source>
</reference>
<name>RR11_SOLTU</name>
<feature type="chain" id="PRO_0000230458" description="Small ribosomal subunit protein uS11c">
    <location>
        <begin position="1"/>
        <end position="138"/>
    </location>
</feature>
<feature type="region of interest" description="Disordered" evidence="2">
    <location>
        <begin position="1"/>
        <end position="22"/>
    </location>
</feature>
<feature type="compositionally biased region" description="Basic residues" evidence="2">
    <location>
        <begin position="9"/>
        <end position="22"/>
    </location>
</feature>
<dbReference type="EMBL" id="DQ231562">
    <property type="protein sequence ID" value="ABB90072.1"/>
    <property type="molecule type" value="Genomic_DNA"/>
</dbReference>
<dbReference type="EMBL" id="DQ386163">
    <property type="protein sequence ID" value="ABD47089.1"/>
    <property type="molecule type" value="Genomic_DNA"/>
</dbReference>
<dbReference type="RefSeq" id="YP_635672.1">
    <property type="nucleotide sequence ID" value="NC_008096.2"/>
</dbReference>
<dbReference type="SMR" id="Q2VEE7"/>
<dbReference type="FunCoup" id="Q2VEE7">
    <property type="interactions" value="1222"/>
</dbReference>
<dbReference type="STRING" id="4113.Q2VEE7"/>
<dbReference type="PaxDb" id="4113-PGSC0003DMT400038934"/>
<dbReference type="EnsemblPlants" id="RHC04H1G1348.2.1">
    <property type="protein sequence ID" value="RHC04H1G1348.2.1.cds.1"/>
    <property type="gene ID" value="RHC04H1G1348.2"/>
</dbReference>
<dbReference type="EnsemblPlants" id="RHC04H1G1353.2.1">
    <property type="protein sequence ID" value="RHC04H1G1353.2.1.cds.1"/>
    <property type="gene ID" value="RHC04H1G1353.2"/>
</dbReference>
<dbReference type="EnsemblPlants" id="RHC04H1G1355.2.1">
    <property type="protein sequence ID" value="RHC04H1G1355.2.1.cds.1"/>
    <property type="gene ID" value="RHC04H1G1355.2"/>
</dbReference>
<dbReference type="EnsemblPlants" id="RHC04H1G1357.2.1">
    <property type="protein sequence ID" value="RHC04H1G1357.2.1.cds.1"/>
    <property type="gene ID" value="RHC04H1G1357.2"/>
</dbReference>
<dbReference type="GeneID" id="4099877"/>
<dbReference type="Gramene" id="RHC04H1G1348.2.1">
    <property type="protein sequence ID" value="RHC04H1G1348.2.1.cds.1"/>
    <property type="gene ID" value="RHC04H1G1348.2"/>
</dbReference>
<dbReference type="Gramene" id="RHC04H1G1353.2.1">
    <property type="protein sequence ID" value="RHC04H1G1353.2.1.cds.1"/>
    <property type="gene ID" value="RHC04H1G1353.2"/>
</dbReference>
<dbReference type="Gramene" id="RHC04H1G1355.2.1">
    <property type="protein sequence ID" value="RHC04H1G1355.2.1.cds.1"/>
    <property type="gene ID" value="RHC04H1G1355.2"/>
</dbReference>
<dbReference type="Gramene" id="RHC04H1G1357.2.1">
    <property type="protein sequence ID" value="RHC04H1G1357.2.1.cds.1"/>
    <property type="gene ID" value="RHC04H1G1357.2"/>
</dbReference>
<dbReference type="KEGG" id="sot:4099877"/>
<dbReference type="eggNOG" id="KOG0408">
    <property type="taxonomic scope" value="Eukaryota"/>
</dbReference>
<dbReference type="InParanoid" id="Q2VEE7"/>
<dbReference type="OrthoDB" id="1286874at2759"/>
<dbReference type="Proteomes" id="UP000011115">
    <property type="component" value="Unassembled WGS sequence"/>
</dbReference>
<dbReference type="GO" id="GO:0009507">
    <property type="term" value="C:chloroplast"/>
    <property type="evidence" value="ECO:0007669"/>
    <property type="project" value="UniProtKB-SubCell"/>
</dbReference>
<dbReference type="GO" id="GO:1990904">
    <property type="term" value="C:ribonucleoprotein complex"/>
    <property type="evidence" value="ECO:0007669"/>
    <property type="project" value="UniProtKB-KW"/>
</dbReference>
<dbReference type="GO" id="GO:0005840">
    <property type="term" value="C:ribosome"/>
    <property type="evidence" value="ECO:0007669"/>
    <property type="project" value="UniProtKB-KW"/>
</dbReference>
<dbReference type="GO" id="GO:0019843">
    <property type="term" value="F:rRNA binding"/>
    <property type="evidence" value="ECO:0007669"/>
    <property type="project" value="UniProtKB-UniRule"/>
</dbReference>
<dbReference type="GO" id="GO:0003735">
    <property type="term" value="F:structural constituent of ribosome"/>
    <property type="evidence" value="ECO:0000318"/>
    <property type="project" value="GO_Central"/>
</dbReference>
<dbReference type="GO" id="GO:0006412">
    <property type="term" value="P:translation"/>
    <property type="evidence" value="ECO:0000318"/>
    <property type="project" value="GO_Central"/>
</dbReference>
<dbReference type="FunFam" id="3.30.420.80:FF:000003">
    <property type="entry name" value="30S ribosomal protein S11, chloroplastic"/>
    <property type="match status" value="1"/>
</dbReference>
<dbReference type="Gene3D" id="3.30.420.80">
    <property type="entry name" value="Ribosomal protein S11"/>
    <property type="match status" value="1"/>
</dbReference>
<dbReference type="HAMAP" id="MF_01310">
    <property type="entry name" value="Ribosomal_uS11"/>
    <property type="match status" value="1"/>
</dbReference>
<dbReference type="InterPro" id="IPR001971">
    <property type="entry name" value="Ribosomal_uS11"/>
</dbReference>
<dbReference type="InterPro" id="IPR019981">
    <property type="entry name" value="Ribosomal_uS11_bac-type"/>
</dbReference>
<dbReference type="InterPro" id="IPR018102">
    <property type="entry name" value="Ribosomal_uS11_CS"/>
</dbReference>
<dbReference type="InterPro" id="IPR036967">
    <property type="entry name" value="Ribosomal_uS11_sf"/>
</dbReference>
<dbReference type="NCBIfam" id="NF003698">
    <property type="entry name" value="PRK05309.1"/>
    <property type="match status" value="1"/>
</dbReference>
<dbReference type="NCBIfam" id="TIGR03632">
    <property type="entry name" value="uS11_bact"/>
    <property type="match status" value="1"/>
</dbReference>
<dbReference type="PANTHER" id="PTHR11759">
    <property type="entry name" value="40S RIBOSOMAL PROTEIN S14/30S RIBOSOMAL PROTEIN S11"/>
    <property type="match status" value="1"/>
</dbReference>
<dbReference type="Pfam" id="PF00411">
    <property type="entry name" value="Ribosomal_S11"/>
    <property type="match status" value="1"/>
</dbReference>
<dbReference type="PIRSF" id="PIRSF002131">
    <property type="entry name" value="Ribosomal_S11"/>
    <property type="match status" value="1"/>
</dbReference>
<dbReference type="SUPFAM" id="SSF53137">
    <property type="entry name" value="Translational machinery components"/>
    <property type="match status" value="1"/>
</dbReference>
<dbReference type="PROSITE" id="PS00054">
    <property type="entry name" value="RIBOSOMAL_S11"/>
    <property type="match status" value="1"/>
</dbReference>
<evidence type="ECO:0000255" key="1">
    <source>
        <dbReference type="HAMAP-Rule" id="MF_01310"/>
    </source>
</evidence>
<evidence type="ECO:0000256" key="2">
    <source>
        <dbReference type="SAM" id="MobiDB-lite"/>
    </source>
</evidence>
<evidence type="ECO:0000305" key="3"/>
<sequence length="138" mass="14913">MAKAIPKISSRRNGRISSRKGARRIPKGVIHVQASFNNTIVTVTDVRGRVVSWSSAGTSGFKGTRRGTPFAAQTAAANAIRTVVDQGMQRAEVMIKGPGLGRDAALRAIRRSGILLTFVRDVTPMPHNGCRPPKKRRV</sequence>
<gene>
    <name evidence="1" type="primary">rps11</name>
</gene>
<proteinExistence type="inferred from homology"/>
<keyword id="KW-0150">Chloroplast</keyword>
<keyword id="KW-0934">Plastid</keyword>
<keyword id="KW-1185">Reference proteome</keyword>
<keyword id="KW-0687">Ribonucleoprotein</keyword>
<keyword id="KW-0689">Ribosomal protein</keyword>
<keyword id="KW-0694">RNA-binding</keyword>
<keyword id="KW-0699">rRNA-binding</keyword>
<accession>Q2VEE7</accession>
<organism>
    <name type="scientific">Solanum tuberosum</name>
    <name type="common">Potato</name>
    <dbReference type="NCBI Taxonomy" id="4113"/>
    <lineage>
        <taxon>Eukaryota</taxon>
        <taxon>Viridiplantae</taxon>
        <taxon>Streptophyta</taxon>
        <taxon>Embryophyta</taxon>
        <taxon>Tracheophyta</taxon>
        <taxon>Spermatophyta</taxon>
        <taxon>Magnoliopsida</taxon>
        <taxon>eudicotyledons</taxon>
        <taxon>Gunneridae</taxon>
        <taxon>Pentapetalae</taxon>
        <taxon>asterids</taxon>
        <taxon>lamiids</taxon>
        <taxon>Solanales</taxon>
        <taxon>Solanaceae</taxon>
        <taxon>Solanoideae</taxon>
        <taxon>Solaneae</taxon>
        <taxon>Solanum</taxon>
    </lineage>
</organism>